<accession>B4RFS9</accession>
<keyword id="KW-0963">Cytoplasm</keyword>
<keyword id="KW-0238">DNA-binding</keyword>
<keyword id="KW-1185">Reference proteome</keyword>
<keyword id="KW-0677">Repeat</keyword>
<keyword id="KW-0804">Transcription</keyword>
<keyword id="KW-0805">Transcription regulation</keyword>
<organism>
    <name type="scientific">Phenylobacterium zucineum (strain HLK1)</name>
    <dbReference type="NCBI Taxonomy" id="450851"/>
    <lineage>
        <taxon>Bacteria</taxon>
        <taxon>Pseudomonadati</taxon>
        <taxon>Pseudomonadota</taxon>
        <taxon>Alphaproteobacteria</taxon>
        <taxon>Caulobacterales</taxon>
        <taxon>Caulobacteraceae</taxon>
        <taxon>Phenylobacterium</taxon>
    </lineage>
</organism>
<comment type="subunit">
    <text evidence="1">Forms oligomers.</text>
</comment>
<comment type="subcellular location">
    <subcellularLocation>
        <location evidence="1">Cytoplasm</location>
        <location evidence="1">Nucleoid</location>
    </subcellularLocation>
</comment>
<comment type="similarity">
    <text evidence="1">Belongs to the MraZ family.</text>
</comment>
<protein>
    <recommendedName>
        <fullName>Transcriptional regulator MraZ</fullName>
    </recommendedName>
</protein>
<feature type="chain" id="PRO_1000191319" description="Transcriptional regulator MraZ">
    <location>
        <begin position="1"/>
        <end position="160"/>
    </location>
</feature>
<feature type="domain" description="SpoVT-AbrB 1" evidence="2">
    <location>
        <begin position="5"/>
        <end position="51"/>
    </location>
</feature>
<feature type="domain" description="SpoVT-AbrB 2" evidence="2">
    <location>
        <begin position="80"/>
        <end position="123"/>
    </location>
</feature>
<name>MRAZ_PHEZH</name>
<evidence type="ECO:0000255" key="1">
    <source>
        <dbReference type="HAMAP-Rule" id="MF_01008"/>
    </source>
</evidence>
<evidence type="ECO:0000255" key="2">
    <source>
        <dbReference type="PROSITE-ProRule" id="PRU01076"/>
    </source>
</evidence>
<proteinExistence type="inferred from homology"/>
<gene>
    <name evidence="1" type="primary">mraZ</name>
    <name type="ordered locus">PHZ_c2332</name>
</gene>
<sequence>MFLSTFEKQLDAKRRIVVPQEFRALAAGPFDGVFCFPSIEADCIEGGGKALFDRYNGVIEELEFGDPLRSALETSVLGGMAKLSFDTAGRITLPESLCDLFGLTDWVTIVGLGDRFQIWEREAFNAHRAAQRELARQGLAELRAQQRAARLAHSGQGSAG</sequence>
<reference key="1">
    <citation type="journal article" date="2008" name="BMC Genomics">
        <title>Complete genome of Phenylobacterium zucineum - a novel facultative intracellular bacterium isolated from human erythroleukemia cell line K562.</title>
        <authorList>
            <person name="Luo Y."/>
            <person name="Xu X."/>
            <person name="Ding Z."/>
            <person name="Liu Z."/>
            <person name="Zhang B."/>
            <person name="Yan Z."/>
            <person name="Sun J."/>
            <person name="Hu S."/>
            <person name="Hu X."/>
        </authorList>
    </citation>
    <scope>NUCLEOTIDE SEQUENCE [LARGE SCALE GENOMIC DNA]</scope>
    <source>
        <strain>HLK1</strain>
    </source>
</reference>
<dbReference type="EMBL" id="CP000747">
    <property type="protein sequence ID" value="ACG78742.1"/>
    <property type="molecule type" value="Genomic_DNA"/>
</dbReference>
<dbReference type="RefSeq" id="WP_012522883.1">
    <property type="nucleotide sequence ID" value="NC_011144.1"/>
</dbReference>
<dbReference type="SMR" id="B4RFS9"/>
<dbReference type="STRING" id="450851.PHZ_c2332"/>
<dbReference type="KEGG" id="pzu:PHZ_c2332"/>
<dbReference type="eggNOG" id="COG2001">
    <property type="taxonomic scope" value="Bacteria"/>
</dbReference>
<dbReference type="HOGENOM" id="CLU_107907_1_0_5"/>
<dbReference type="OrthoDB" id="9807753at2"/>
<dbReference type="Proteomes" id="UP000001868">
    <property type="component" value="Chromosome"/>
</dbReference>
<dbReference type="GO" id="GO:0005737">
    <property type="term" value="C:cytoplasm"/>
    <property type="evidence" value="ECO:0007669"/>
    <property type="project" value="UniProtKB-UniRule"/>
</dbReference>
<dbReference type="GO" id="GO:0009295">
    <property type="term" value="C:nucleoid"/>
    <property type="evidence" value="ECO:0007669"/>
    <property type="project" value="UniProtKB-SubCell"/>
</dbReference>
<dbReference type="GO" id="GO:0003700">
    <property type="term" value="F:DNA-binding transcription factor activity"/>
    <property type="evidence" value="ECO:0007669"/>
    <property type="project" value="UniProtKB-UniRule"/>
</dbReference>
<dbReference type="GO" id="GO:0000976">
    <property type="term" value="F:transcription cis-regulatory region binding"/>
    <property type="evidence" value="ECO:0007669"/>
    <property type="project" value="TreeGrafter"/>
</dbReference>
<dbReference type="GO" id="GO:2000143">
    <property type="term" value="P:negative regulation of DNA-templated transcription initiation"/>
    <property type="evidence" value="ECO:0007669"/>
    <property type="project" value="TreeGrafter"/>
</dbReference>
<dbReference type="CDD" id="cd16321">
    <property type="entry name" value="MraZ_C"/>
    <property type="match status" value="1"/>
</dbReference>
<dbReference type="CDD" id="cd16320">
    <property type="entry name" value="MraZ_N"/>
    <property type="match status" value="1"/>
</dbReference>
<dbReference type="Gene3D" id="3.40.1550.20">
    <property type="entry name" value="Transcriptional regulator MraZ domain"/>
    <property type="match status" value="1"/>
</dbReference>
<dbReference type="HAMAP" id="MF_01008">
    <property type="entry name" value="MraZ"/>
    <property type="match status" value="1"/>
</dbReference>
<dbReference type="InterPro" id="IPR003444">
    <property type="entry name" value="MraZ"/>
</dbReference>
<dbReference type="InterPro" id="IPR035644">
    <property type="entry name" value="MraZ_C"/>
</dbReference>
<dbReference type="InterPro" id="IPR020603">
    <property type="entry name" value="MraZ_dom"/>
</dbReference>
<dbReference type="InterPro" id="IPR035642">
    <property type="entry name" value="MraZ_N"/>
</dbReference>
<dbReference type="InterPro" id="IPR038619">
    <property type="entry name" value="MraZ_sf"/>
</dbReference>
<dbReference type="InterPro" id="IPR007159">
    <property type="entry name" value="SpoVT-AbrB_dom"/>
</dbReference>
<dbReference type="InterPro" id="IPR037914">
    <property type="entry name" value="SpoVT-AbrB_sf"/>
</dbReference>
<dbReference type="PANTHER" id="PTHR34701">
    <property type="entry name" value="TRANSCRIPTIONAL REGULATOR MRAZ"/>
    <property type="match status" value="1"/>
</dbReference>
<dbReference type="PANTHER" id="PTHR34701:SF1">
    <property type="entry name" value="TRANSCRIPTIONAL REGULATOR MRAZ"/>
    <property type="match status" value="1"/>
</dbReference>
<dbReference type="Pfam" id="PF02381">
    <property type="entry name" value="MraZ"/>
    <property type="match status" value="1"/>
</dbReference>
<dbReference type="SUPFAM" id="SSF89447">
    <property type="entry name" value="AbrB/MazE/MraZ-like"/>
    <property type="match status" value="1"/>
</dbReference>
<dbReference type="PROSITE" id="PS51740">
    <property type="entry name" value="SPOVT_ABRB"/>
    <property type="match status" value="2"/>
</dbReference>